<comment type="function">
    <text evidence="1">Catalyzes the ATP-dependent phosphorylation of N-acetyl-L-glutamate.</text>
</comment>
<comment type="catalytic activity">
    <reaction evidence="1">
        <text>N-acetyl-L-glutamate + ATP = N-acetyl-L-glutamyl 5-phosphate + ADP</text>
        <dbReference type="Rhea" id="RHEA:14629"/>
        <dbReference type="ChEBI" id="CHEBI:30616"/>
        <dbReference type="ChEBI" id="CHEBI:44337"/>
        <dbReference type="ChEBI" id="CHEBI:57936"/>
        <dbReference type="ChEBI" id="CHEBI:456216"/>
        <dbReference type="EC" id="2.7.2.8"/>
    </reaction>
</comment>
<comment type="pathway">
    <text evidence="1">Amino-acid biosynthesis; L-arginine biosynthesis; N(2)-acetyl-L-ornithine from L-glutamate: step 2/4.</text>
</comment>
<comment type="subcellular location">
    <subcellularLocation>
        <location evidence="1">Cytoplasm</location>
    </subcellularLocation>
</comment>
<comment type="similarity">
    <text evidence="1">Belongs to the acetylglutamate kinase family. ArgB subfamily.</text>
</comment>
<protein>
    <recommendedName>
        <fullName evidence="1">Acetylglutamate kinase</fullName>
        <ecNumber evidence="1">2.7.2.8</ecNumber>
    </recommendedName>
    <alternativeName>
        <fullName evidence="1">N-acetyl-L-glutamate 5-phosphotransferase</fullName>
    </alternativeName>
    <alternativeName>
        <fullName evidence="1">NAG kinase</fullName>
        <shortName evidence="1">NAGK</shortName>
    </alternativeName>
</protein>
<dbReference type="EC" id="2.7.2.8" evidence="1"/>
<dbReference type="EMBL" id="BA000028">
    <property type="protein sequence ID" value="BAC13033.1"/>
    <property type="molecule type" value="Genomic_DNA"/>
</dbReference>
<dbReference type="RefSeq" id="WP_011065478.1">
    <property type="nucleotide sequence ID" value="NC_004193.1"/>
</dbReference>
<dbReference type="SMR" id="Q8CUN0"/>
<dbReference type="STRING" id="221109.gene:10733315"/>
<dbReference type="KEGG" id="oih:OB1077"/>
<dbReference type="eggNOG" id="COG0548">
    <property type="taxonomic scope" value="Bacteria"/>
</dbReference>
<dbReference type="HOGENOM" id="CLU_053680_0_0_9"/>
<dbReference type="OrthoDB" id="9803155at2"/>
<dbReference type="PhylomeDB" id="Q8CUN0"/>
<dbReference type="UniPathway" id="UPA00068">
    <property type="reaction ID" value="UER00107"/>
</dbReference>
<dbReference type="Proteomes" id="UP000000822">
    <property type="component" value="Chromosome"/>
</dbReference>
<dbReference type="GO" id="GO:0005737">
    <property type="term" value="C:cytoplasm"/>
    <property type="evidence" value="ECO:0007669"/>
    <property type="project" value="UniProtKB-SubCell"/>
</dbReference>
<dbReference type="GO" id="GO:0003991">
    <property type="term" value="F:acetylglutamate kinase activity"/>
    <property type="evidence" value="ECO:0007669"/>
    <property type="project" value="UniProtKB-UniRule"/>
</dbReference>
<dbReference type="GO" id="GO:0005524">
    <property type="term" value="F:ATP binding"/>
    <property type="evidence" value="ECO:0007669"/>
    <property type="project" value="UniProtKB-UniRule"/>
</dbReference>
<dbReference type="GO" id="GO:0042450">
    <property type="term" value="P:arginine biosynthetic process via ornithine"/>
    <property type="evidence" value="ECO:0007669"/>
    <property type="project" value="UniProtKB-UniRule"/>
</dbReference>
<dbReference type="GO" id="GO:0006526">
    <property type="term" value="P:L-arginine biosynthetic process"/>
    <property type="evidence" value="ECO:0007669"/>
    <property type="project" value="UniProtKB-UniPathway"/>
</dbReference>
<dbReference type="CDD" id="cd04238">
    <property type="entry name" value="AAK_NAGK-like"/>
    <property type="match status" value="1"/>
</dbReference>
<dbReference type="FunFam" id="3.40.1160.10:FF:000004">
    <property type="entry name" value="Acetylglutamate kinase"/>
    <property type="match status" value="1"/>
</dbReference>
<dbReference type="Gene3D" id="3.40.1160.10">
    <property type="entry name" value="Acetylglutamate kinase-like"/>
    <property type="match status" value="1"/>
</dbReference>
<dbReference type="HAMAP" id="MF_00082">
    <property type="entry name" value="ArgB"/>
    <property type="match status" value="1"/>
</dbReference>
<dbReference type="InterPro" id="IPR036393">
    <property type="entry name" value="AceGlu_kinase-like_sf"/>
</dbReference>
<dbReference type="InterPro" id="IPR004662">
    <property type="entry name" value="AcgluKinase_fam"/>
</dbReference>
<dbReference type="InterPro" id="IPR037528">
    <property type="entry name" value="ArgB"/>
</dbReference>
<dbReference type="InterPro" id="IPR001048">
    <property type="entry name" value="Asp/Glu/Uridylate_kinase"/>
</dbReference>
<dbReference type="NCBIfam" id="TIGR00761">
    <property type="entry name" value="argB"/>
    <property type="match status" value="1"/>
</dbReference>
<dbReference type="PANTHER" id="PTHR23342">
    <property type="entry name" value="N-ACETYLGLUTAMATE SYNTHASE"/>
    <property type="match status" value="1"/>
</dbReference>
<dbReference type="PANTHER" id="PTHR23342:SF0">
    <property type="entry name" value="N-ACETYLGLUTAMATE SYNTHASE, MITOCHONDRIAL"/>
    <property type="match status" value="1"/>
</dbReference>
<dbReference type="Pfam" id="PF00696">
    <property type="entry name" value="AA_kinase"/>
    <property type="match status" value="1"/>
</dbReference>
<dbReference type="PIRSF" id="PIRSF000728">
    <property type="entry name" value="NAGK"/>
    <property type="match status" value="1"/>
</dbReference>
<dbReference type="SUPFAM" id="SSF53633">
    <property type="entry name" value="Carbamate kinase-like"/>
    <property type="match status" value="1"/>
</dbReference>
<keyword id="KW-0028">Amino-acid biosynthesis</keyword>
<keyword id="KW-0055">Arginine biosynthesis</keyword>
<keyword id="KW-0067">ATP-binding</keyword>
<keyword id="KW-0963">Cytoplasm</keyword>
<keyword id="KW-0418">Kinase</keyword>
<keyword id="KW-0547">Nucleotide-binding</keyword>
<keyword id="KW-1185">Reference proteome</keyword>
<keyword id="KW-0808">Transferase</keyword>
<name>ARGB_OCEIH</name>
<proteinExistence type="inferred from homology"/>
<accession>Q8CUN0</accession>
<sequence>MTTVVFKVGGSVLNQLSPKFYQVLLQLKETGTCNPIIVHGGGPEINEALSKMNIKTEFVDGLRVTSEEVLSIAEMVMSGTINKRIVSSIQSIGGNALGLSGVDGKLLRAKQMHDGKLGLVGEVVEVNTEWLSIIMNSGGIPVISPIAIGDADKRYNVNGDMAAGAVAEAFQSKLILVSNIPGVIESVNGEEIIHHHLTKQQVESKIDSGVIYGGMIPKVRSALASLKSGVAESVILNGLNPIEIKNYLEGKTVGTVLTEREVEHV</sequence>
<reference key="1">
    <citation type="journal article" date="2002" name="Nucleic Acids Res.">
        <title>Genome sequence of Oceanobacillus iheyensis isolated from the Iheya Ridge and its unexpected adaptive capabilities to extreme environments.</title>
        <authorList>
            <person name="Takami H."/>
            <person name="Takaki Y."/>
            <person name="Uchiyama I."/>
        </authorList>
    </citation>
    <scope>NUCLEOTIDE SEQUENCE [LARGE SCALE GENOMIC DNA]</scope>
    <source>
        <strain>DSM 14371 / CIP 107618 / JCM 11309 / KCTC 3954 / HTE831</strain>
    </source>
</reference>
<organism>
    <name type="scientific">Oceanobacillus iheyensis (strain DSM 14371 / CIP 107618 / JCM 11309 / KCTC 3954 / HTE831)</name>
    <dbReference type="NCBI Taxonomy" id="221109"/>
    <lineage>
        <taxon>Bacteria</taxon>
        <taxon>Bacillati</taxon>
        <taxon>Bacillota</taxon>
        <taxon>Bacilli</taxon>
        <taxon>Bacillales</taxon>
        <taxon>Bacillaceae</taxon>
        <taxon>Oceanobacillus</taxon>
    </lineage>
</organism>
<gene>
    <name evidence="1" type="primary">argB</name>
    <name type="ordered locus">OB1077</name>
</gene>
<evidence type="ECO:0000255" key="1">
    <source>
        <dbReference type="HAMAP-Rule" id="MF_00082"/>
    </source>
</evidence>
<feature type="chain" id="PRO_0000112642" description="Acetylglutamate kinase">
    <location>
        <begin position="1"/>
        <end position="265"/>
    </location>
</feature>
<feature type="binding site" evidence="1">
    <location>
        <begin position="41"/>
        <end position="42"/>
    </location>
    <ligand>
        <name>substrate</name>
    </ligand>
</feature>
<feature type="binding site" evidence="1">
    <location>
        <position position="63"/>
    </location>
    <ligand>
        <name>substrate</name>
    </ligand>
</feature>
<feature type="binding site" evidence="1">
    <location>
        <position position="156"/>
    </location>
    <ligand>
        <name>substrate</name>
    </ligand>
</feature>
<feature type="site" description="Transition state stabilizer" evidence="1">
    <location>
        <position position="7"/>
    </location>
</feature>
<feature type="site" description="Transition state stabilizer" evidence="1">
    <location>
        <position position="218"/>
    </location>
</feature>